<dbReference type="EMBL" id="X80792">
    <property type="protein sequence ID" value="CAA56767.1"/>
    <property type="molecule type" value="mRNA"/>
</dbReference>
<dbReference type="PIR" id="A54817">
    <property type="entry name" value="A54817"/>
</dbReference>
<dbReference type="RefSeq" id="NP_990561.1">
    <property type="nucleotide sequence ID" value="NM_205230.1"/>
</dbReference>
<dbReference type="SMR" id="Q90988"/>
<dbReference type="FunCoup" id="Q90988">
    <property type="interactions" value="1929"/>
</dbReference>
<dbReference type="STRING" id="9031.ENSGALP00000066625"/>
<dbReference type="PaxDb" id="9031-ENSGALP00000036816"/>
<dbReference type="GeneID" id="396156"/>
<dbReference type="KEGG" id="gga:396156"/>
<dbReference type="CTD" id="10592"/>
<dbReference type="VEuPathDB" id="HostDB:geneid_396156"/>
<dbReference type="eggNOG" id="KOG0933">
    <property type="taxonomic scope" value="Eukaryota"/>
</dbReference>
<dbReference type="InParanoid" id="Q90988"/>
<dbReference type="OrthoDB" id="10255539at2759"/>
<dbReference type="PhylomeDB" id="Q90988"/>
<dbReference type="PRO" id="PR:Q90988"/>
<dbReference type="Proteomes" id="UP000000539">
    <property type="component" value="Unassembled WGS sequence"/>
</dbReference>
<dbReference type="GO" id="GO:0000785">
    <property type="term" value="C:chromatin"/>
    <property type="evidence" value="ECO:0000318"/>
    <property type="project" value="GO_Central"/>
</dbReference>
<dbReference type="GO" id="GO:0000793">
    <property type="term" value="C:condensed chromosome"/>
    <property type="evidence" value="ECO:0000318"/>
    <property type="project" value="GO_Central"/>
</dbReference>
<dbReference type="GO" id="GO:0000796">
    <property type="term" value="C:condensin complex"/>
    <property type="evidence" value="ECO:0000318"/>
    <property type="project" value="GO_Central"/>
</dbReference>
<dbReference type="GO" id="GO:0005737">
    <property type="term" value="C:cytoplasm"/>
    <property type="evidence" value="ECO:0007669"/>
    <property type="project" value="UniProtKB-SubCell"/>
</dbReference>
<dbReference type="GO" id="GO:0005634">
    <property type="term" value="C:nucleus"/>
    <property type="evidence" value="ECO:0007669"/>
    <property type="project" value="UniProtKB-SubCell"/>
</dbReference>
<dbReference type="GO" id="GO:0005524">
    <property type="term" value="F:ATP binding"/>
    <property type="evidence" value="ECO:0007669"/>
    <property type="project" value="UniProtKB-KW"/>
</dbReference>
<dbReference type="GO" id="GO:0016887">
    <property type="term" value="F:ATP hydrolysis activity"/>
    <property type="evidence" value="ECO:0007669"/>
    <property type="project" value="InterPro"/>
</dbReference>
<dbReference type="GO" id="GO:0003682">
    <property type="term" value="F:chromatin binding"/>
    <property type="evidence" value="ECO:0000318"/>
    <property type="project" value="GO_Central"/>
</dbReference>
<dbReference type="GO" id="GO:0051301">
    <property type="term" value="P:cell division"/>
    <property type="evidence" value="ECO:0007669"/>
    <property type="project" value="UniProtKB-KW"/>
</dbReference>
<dbReference type="GO" id="GO:0007076">
    <property type="term" value="P:mitotic chromosome condensation"/>
    <property type="evidence" value="ECO:0000318"/>
    <property type="project" value="GO_Central"/>
</dbReference>
<dbReference type="CDD" id="cd03273">
    <property type="entry name" value="ABC_SMC2_euk"/>
    <property type="match status" value="1"/>
</dbReference>
<dbReference type="FunFam" id="1.20.1060.20:FF:000005">
    <property type="entry name" value="Structural maintenance of chromosomes 2"/>
    <property type="match status" value="1"/>
</dbReference>
<dbReference type="FunFam" id="3.40.50.300:FF:000278">
    <property type="entry name" value="Structural maintenance of chromosomes 2"/>
    <property type="match status" value="1"/>
</dbReference>
<dbReference type="FunFam" id="3.40.50.300:FF:000385">
    <property type="entry name" value="Structural maintenance of chromosomes 2"/>
    <property type="match status" value="1"/>
</dbReference>
<dbReference type="Gene3D" id="1.20.1060.20">
    <property type="match status" value="1"/>
</dbReference>
<dbReference type="Gene3D" id="3.30.70.1620">
    <property type="match status" value="1"/>
</dbReference>
<dbReference type="Gene3D" id="3.40.50.300">
    <property type="entry name" value="P-loop containing nucleotide triphosphate hydrolases"/>
    <property type="match status" value="2"/>
</dbReference>
<dbReference type="InterPro" id="IPR027417">
    <property type="entry name" value="P-loop_NTPase"/>
</dbReference>
<dbReference type="InterPro" id="IPR003395">
    <property type="entry name" value="RecF/RecN/SMC_N"/>
</dbReference>
<dbReference type="InterPro" id="IPR024704">
    <property type="entry name" value="SMC"/>
</dbReference>
<dbReference type="InterPro" id="IPR027120">
    <property type="entry name" value="Smc2_ABC"/>
</dbReference>
<dbReference type="InterPro" id="IPR010935">
    <property type="entry name" value="SMC_hinge"/>
</dbReference>
<dbReference type="InterPro" id="IPR036277">
    <property type="entry name" value="SMC_hinge_sf"/>
</dbReference>
<dbReference type="PANTHER" id="PTHR43977">
    <property type="entry name" value="STRUCTURAL MAINTENANCE OF CHROMOSOMES PROTEIN 3"/>
    <property type="match status" value="1"/>
</dbReference>
<dbReference type="Pfam" id="PF06470">
    <property type="entry name" value="SMC_hinge"/>
    <property type="match status" value="1"/>
</dbReference>
<dbReference type="Pfam" id="PF02463">
    <property type="entry name" value="SMC_N"/>
    <property type="match status" value="1"/>
</dbReference>
<dbReference type="PIRSF" id="PIRSF005719">
    <property type="entry name" value="SMC"/>
    <property type="match status" value="1"/>
</dbReference>
<dbReference type="SMART" id="SM00968">
    <property type="entry name" value="SMC_hinge"/>
    <property type="match status" value="1"/>
</dbReference>
<dbReference type="SUPFAM" id="SSF52540">
    <property type="entry name" value="P-loop containing nucleoside triphosphate hydrolases"/>
    <property type="match status" value="1"/>
</dbReference>
<dbReference type="SUPFAM" id="SSF75553">
    <property type="entry name" value="Smc hinge domain"/>
    <property type="match status" value="1"/>
</dbReference>
<reference key="1">
    <citation type="journal article" date="1994" name="J. Cell Biol.">
        <title>ScII: an abundant chromosome scaffold protein is a member of a family of putative ATPases with an unusual predicted tertiary structure.</title>
        <authorList>
            <person name="Saitoh N."/>
            <person name="Goldberg I.G."/>
            <person name="Wood E.R."/>
            <person name="Earnshaw W.C."/>
        </authorList>
    </citation>
    <scope>NUCLEOTIDE SEQUENCE [MRNA]</scope>
    <source>
        <tissue>Fibroblast</tissue>
    </source>
</reference>
<protein>
    <recommendedName>
        <fullName>Structural maintenance of chromosomes protein 2</fullName>
        <shortName>SMC protein 2</shortName>
        <shortName>SMC-2</shortName>
    </recommendedName>
    <alternativeName>
        <fullName>Chromosome scaffold protein ScII</fullName>
    </alternativeName>
</protein>
<comment type="function">
    <text>Central component of the condensin complex, a complex required for conversion of interphase chromatin into mitotic-like condense chromosomes. The condensin complex probably introduces positive supercoils into relaxed DNA in the presence of type I topoisomerases and converts nicked DNA into positive knotted forms in the presence of type II topoisomerases.</text>
</comment>
<comment type="subunit">
    <text>Forms a heterodimer with SMC4. Component of the condensin complex, which contains the SMC2 and SMC4 heterodimer, and probably some non SMC subunits that regulate the complex.</text>
</comment>
<comment type="subcellular location">
    <subcellularLocation>
        <location>Nucleus</location>
    </subcellularLocation>
    <subcellularLocation>
        <location>Cytoplasm</location>
    </subcellularLocation>
    <subcellularLocation>
        <location>Chromosome</location>
    </subcellularLocation>
    <text>In interphase cells, the majority of the condensin complex is found in the cytoplasm, while a minority of the complex is associated with chromatin. A subpopulation of the complex however remains associated with chromosome foci in interphase cells. During mitosis, most of the condensin complex is associated with the chromatin. At the onset of prophase, condensin associates with chromosome arms and to chromosome condensation. Dissociation from chromosomes is observed in late telophase.</text>
</comment>
<comment type="domain">
    <text evidence="1">The flexible SMC hinge domain, which separates the large intramolecular coiled coil regions, allows the heterodimerization with SMC4, forming a V-shaped heterodimer.</text>
</comment>
<comment type="similarity">
    <text evidence="4">Belongs to the SMC family. SMC2 subfamily.</text>
</comment>
<sequence>MYIKSIVLEGFKSYAQRTEIRDFDPLFNAITGLNGSGKSNILDSICFLLGISNLSQVRASSLQDLVYKNGQAGVNKATVSITFDNSDKKNSPLGFENNDEITITRQVIVGGRNKYLINGMNASNNRVQDLFGSVGLNVNNPHFLIMQGQITKVLNMKPTEILAMIEEAAGTRMYECKKITAHKTIEKKESKLDEIRRIITEEISPTLEKLKEARASYLEYQKMTREVENLRRIYVAFQYVRAEEIKDRSTNALKEAQANKKKIFESMAENEKKVKELAQQIEETEKKNNEEFGAKLHSLEAAFSELQRVDAKVRSDLDHRKQNLNSEENRLKELIKIMQEEFKAFTSKEKEIKKIKEGLNGLQEESKKDAEALASAQQHFNAVSAGLSSNDSGQGTSLADQMMTCKNEISKAATEAKQAQMKLKYAQQELKTKQAEVKKMDGSYKEDQEAFEAIRKTKEKLQDEMKKLKYEEAEQEAHLAKKKQLSSEISSLRELCESIEAKHPYLRFEYKNPEKNWNPNCVKGLVVTLITVKDISTSKALEAVAGGKLYNIVVDTEATGKKILEKGQLKHRYTIIPLSKISANSIGHEIISLAKNLIGHREVHIAISLIDYNSELQKAMEYVFGTTLVCSSMDNAKKVTFDKRIMRKTVTLQGDIFDPQGTLSGGASSHVTPILSKLKTMRDAEDELKIKTSQLEATEKELANLKNMAEKYQHLKQQWEMKSEEAELLQTKIQQSAYHKQQEDLLALKKTIAECEETLKKTEESQRKAEEEYKALENKMKNAEAERGKEIKNAQQKLNSAKKKADDSSRKMKEKQQEVEALVLELEQLKQEQASYKQQSEAAQQAIASLKEQVSALEAEAVKTRESLKNAENELSSEKGLMEERTKDIKAKSAKIEKYREQNNELQLSINALEHDINKYQQETADASSTLDKLLKEYKWIASEKELFGQADTTYDFEANNPKETGQKLQKLLTKKEKLEKSLNMRAMNLLSEAEERYNDLMKKKRMVENDKIKILATIEELDRKKNKALHIAWEKVNKDFGSIFSMLLPGAKAMLVPSKKQNILDGLEFRVGLGDIWKENLTELSGGQRSLAALSLILAILLFKPAPIYILDEVDAALDLSHTQNIGQMLHAHFKQSQFLVVSLKDGMFNNANVLYRTKFVDGISTVSRHCQLKKKQPLSEASNNKDE</sequence>
<feature type="chain" id="PRO_0000118997" description="Structural maintenance of chromosomes protein 2">
    <location>
        <begin position="1"/>
        <end position="1189"/>
    </location>
</feature>
<feature type="domain" description="SMC hinge">
    <location>
        <begin position="522"/>
        <end position="639"/>
    </location>
</feature>
<feature type="region of interest" description="Disordered" evidence="3">
    <location>
        <begin position="782"/>
        <end position="814"/>
    </location>
</feature>
<feature type="region of interest" description="Disordered" evidence="3">
    <location>
        <begin position="867"/>
        <end position="886"/>
    </location>
</feature>
<feature type="coiled-coil region" evidence="2">
    <location>
        <begin position="211"/>
        <end position="503"/>
    </location>
</feature>
<feature type="coiled-coil region" evidence="2">
    <location>
        <begin position="674"/>
        <end position="1030"/>
    </location>
</feature>
<feature type="compositionally biased region" description="Basic and acidic residues" evidence="3">
    <location>
        <begin position="782"/>
        <end position="792"/>
    </location>
</feature>
<feature type="compositionally biased region" description="Basic and acidic residues" evidence="3">
    <location>
        <begin position="803"/>
        <end position="814"/>
    </location>
</feature>
<feature type="binding site" evidence="2">
    <location>
        <begin position="32"/>
        <end position="39"/>
    </location>
    <ligand>
        <name>ATP</name>
        <dbReference type="ChEBI" id="CHEBI:30616"/>
    </ligand>
</feature>
<gene>
    <name type="primary">SMC2</name>
    <name type="synonym">SCII</name>
    <name type="synonym">SMC2L1</name>
</gene>
<proteinExistence type="evidence at transcript level"/>
<organism>
    <name type="scientific">Gallus gallus</name>
    <name type="common">Chicken</name>
    <dbReference type="NCBI Taxonomy" id="9031"/>
    <lineage>
        <taxon>Eukaryota</taxon>
        <taxon>Metazoa</taxon>
        <taxon>Chordata</taxon>
        <taxon>Craniata</taxon>
        <taxon>Vertebrata</taxon>
        <taxon>Euteleostomi</taxon>
        <taxon>Archelosauria</taxon>
        <taxon>Archosauria</taxon>
        <taxon>Dinosauria</taxon>
        <taxon>Saurischia</taxon>
        <taxon>Theropoda</taxon>
        <taxon>Coelurosauria</taxon>
        <taxon>Aves</taxon>
        <taxon>Neognathae</taxon>
        <taxon>Galloanserae</taxon>
        <taxon>Galliformes</taxon>
        <taxon>Phasianidae</taxon>
        <taxon>Phasianinae</taxon>
        <taxon>Gallus</taxon>
    </lineage>
</organism>
<name>SMC2_CHICK</name>
<evidence type="ECO:0000250" key="1"/>
<evidence type="ECO:0000255" key="2"/>
<evidence type="ECO:0000256" key="3">
    <source>
        <dbReference type="SAM" id="MobiDB-lite"/>
    </source>
</evidence>
<evidence type="ECO:0000305" key="4"/>
<keyword id="KW-0067">ATP-binding</keyword>
<keyword id="KW-0131">Cell cycle</keyword>
<keyword id="KW-0132">Cell division</keyword>
<keyword id="KW-0158">Chromosome</keyword>
<keyword id="KW-0175">Coiled coil</keyword>
<keyword id="KW-0963">Cytoplasm</keyword>
<keyword id="KW-0226">DNA condensation</keyword>
<keyword id="KW-0498">Mitosis</keyword>
<keyword id="KW-0547">Nucleotide-binding</keyword>
<keyword id="KW-0539">Nucleus</keyword>
<keyword id="KW-1185">Reference proteome</keyword>
<accession>Q90988</accession>